<gene>
    <name evidence="1" type="primary">rplO</name>
    <name type="ordered locus">SPy_0072</name>
    <name type="ordered locus">M5005_Spy0063</name>
</gene>
<evidence type="ECO:0000255" key="1">
    <source>
        <dbReference type="HAMAP-Rule" id="MF_01341"/>
    </source>
</evidence>
<evidence type="ECO:0000256" key="2">
    <source>
        <dbReference type="SAM" id="MobiDB-lite"/>
    </source>
</evidence>
<evidence type="ECO:0000305" key="3"/>
<organism>
    <name type="scientific">Streptococcus pyogenes serotype M1</name>
    <dbReference type="NCBI Taxonomy" id="301447"/>
    <lineage>
        <taxon>Bacteria</taxon>
        <taxon>Bacillati</taxon>
        <taxon>Bacillota</taxon>
        <taxon>Bacilli</taxon>
        <taxon>Lactobacillales</taxon>
        <taxon>Streptococcaceae</taxon>
        <taxon>Streptococcus</taxon>
    </lineage>
</organism>
<protein>
    <recommendedName>
        <fullName evidence="1">Large ribosomal subunit protein uL15</fullName>
    </recommendedName>
    <alternativeName>
        <fullName evidence="3">50S ribosomal protein L15</fullName>
    </alternativeName>
</protein>
<proteinExistence type="inferred from homology"/>
<keyword id="KW-1185">Reference proteome</keyword>
<keyword id="KW-0687">Ribonucleoprotein</keyword>
<keyword id="KW-0689">Ribosomal protein</keyword>
<keyword id="KW-0694">RNA-binding</keyword>
<keyword id="KW-0699">rRNA-binding</keyword>
<sequence>MKLHELKAAEGSRKVRNRVGRGTSSGNGKTSGRGQKGQKARSGGGVRLGFEGGQTPLFRRIPKRGFTNINTKEYALVNLDQLNVFDDGTEVTPAILKDAGIVRAEKSGVKVLGNGELTKKLTVKAAKFSKSAEAAIIAKGGSIEVI</sequence>
<comment type="function">
    <text evidence="1">Binds to the 23S rRNA.</text>
</comment>
<comment type="subunit">
    <text evidence="1">Part of the 50S ribosomal subunit.</text>
</comment>
<comment type="similarity">
    <text evidence="1">Belongs to the universal ribosomal protein uL15 family.</text>
</comment>
<accession>Q9A1V5</accession>
<accession>Q491N6</accession>
<name>RL15_STRP1</name>
<feature type="chain" id="PRO_0000104824" description="Large ribosomal subunit protein uL15">
    <location>
        <begin position="1"/>
        <end position="146"/>
    </location>
</feature>
<feature type="region of interest" description="Disordered" evidence="2">
    <location>
        <begin position="1"/>
        <end position="51"/>
    </location>
</feature>
<feature type="compositionally biased region" description="Basic and acidic residues" evidence="2">
    <location>
        <begin position="1"/>
        <end position="13"/>
    </location>
</feature>
<feature type="compositionally biased region" description="Gly residues" evidence="2">
    <location>
        <begin position="23"/>
        <end position="35"/>
    </location>
</feature>
<feature type="compositionally biased region" description="Gly residues" evidence="2">
    <location>
        <begin position="42"/>
        <end position="51"/>
    </location>
</feature>
<dbReference type="EMBL" id="AE004092">
    <property type="protein sequence ID" value="AAK33201.1"/>
    <property type="molecule type" value="Genomic_DNA"/>
</dbReference>
<dbReference type="EMBL" id="CP000017">
    <property type="protein sequence ID" value="AAZ50682.1"/>
    <property type="molecule type" value="Genomic_DNA"/>
</dbReference>
<dbReference type="RefSeq" id="NP_268479.1">
    <property type="nucleotide sequence ID" value="NC_002737.2"/>
</dbReference>
<dbReference type="SMR" id="Q9A1V5"/>
<dbReference type="PaxDb" id="1314-HKU360_00096"/>
<dbReference type="KEGG" id="spy:SPy_0072"/>
<dbReference type="KEGG" id="spz:M5005_Spy0063"/>
<dbReference type="PATRIC" id="fig|160490.10.peg.63"/>
<dbReference type="HOGENOM" id="CLU_055188_4_2_9"/>
<dbReference type="OMA" id="WFEGGQM"/>
<dbReference type="PRO" id="PR:Q9A1V5"/>
<dbReference type="Proteomes" id="UP000000750">
    <property type="component" value="Chromosome"/>
</dbReference>
<dbReference type="GO" id="GO:0022625">
    <property type="term" value="C:cytosolic large ribosomal subunit"/>
    <property type="evidence" value="ECO:0007669"/>
    <property type="project" value="TreeGrafter"/>
</dbReference>
<dbReference type="GO" id="GO:0019843">
    <property type="term" value="F:rRNA binding"/>
    <property type="evidence" value="ECO:0007669"/>
    <property type="project" value="UniProtKB-UniRule"/>
</dbReference>
<dbReference type="GO" id="GO:0003735">
    <property type="term" value="F:structural constituent of ribosome"/>
    <property type="evidence" value="ECO:0007669"/>
    <property type="project" value="InterPro"/>
</dbReference>
<dbReference type="GO" id="GO:0006412">
    <property type="term" value="P:translation"/>
    <property type="evidence" value="ECO:0007669"/>
    <property type="project" value="UniProtKB-UniRule"/>
</dbReference>
<dbReference type="Gene3D" id="3.100.10.10">
    <property type="match status" value="1"/>
</dbReference>
<dbReference type="HAMAP" id="MF_01341">
    <property type="entry name" value="Ribosomal_uL15"/>
    <property type="match status" value="1"/>
</dbReference>
<dbReference type="InterPro" id="IPR030878">
    <property type="entry name" value="Ribosomal_uL15"/>
</dbReference>
<dbReference type="InterPro" id="IPR021131">
    <property type="entry name" value="Ribosomal_uL15/eL18"/>
</dbReference>
<dbReference type="InterPro" id="IPR036227">
    <property type="entry name" value="Ribosomal_uL15/eL18_sf"/>
</dbReference>
<dbReference type="InterPro" id="IPR005749">
    <property type="entry name" value="Ribosomal_uL15_bac-type"/>
</dbReference>
<dbReference type="InterPro" id="IPR001196">
    <property type="entry name" value="Ribosomal_uL15_CS"/>
</dbReference>
<dbReference type="NCBIfam" id="TIGR01071">
    <property type="entry name" value="rplO_bact"/>
    <property type="match status" value="1"/>
</dbReference>
<dbReference type="PANTHER" id="PTHR12934">
    <property type="entry name" value="50S RIBOSOMAL PROTEIN L15"/>
    <property type="match status" value="1"/>
</dbReference>
<dbReference type="PANTHER" id="PTHR12934:SF11">
    <property type="entry name" value="LARGE RIBOSOMAL SUBUNIT PROTEIN UL15M"/>
    <property type="match status" value="1"/>
</dbReference>
<dbReference type="Pfam" id="PF00828">
    <property type="entry name" value="Ribosomal_L27A"/>
    <property type="match status" value="1"/>
</dbReference>
<dbReference type="SUPFAM" id="SSF52080">
    <property type="entry name" value="Ribosomal proteins L15p and L18e"/>
    <property type="match status" value="1"/>
</dbReference>
<dbReference type="PROSITE" id="PS00475">
    <property type="entry name" value="RIBOSOMAL_L15"/>
    <property type="match status" value="1"/>
</dbReference>
<reference key="1">
    <citation type="journal article" date="2001" name="Proc. Natl. Acad. Sci. U.S.A.">
        <title>Complete genome sequence of an M1 strain of Streptococcus pyogenes.</title>
        <authorList>
            <person name="Ferretti J.J."/>
            <person name="McShan W.M."/>
            <person name="Ajdic D.J."/>
            <person name="Savic D.J."/>
            <person name="Savic G."/>
            <person name="Lyon K."/>
            <person name="Primeaux C."/>
            <person name="Sezate S."/>
            <person name="Suvorov A.N."/>
            <person name="Kenton S."/>
            <person name="Lai H.S."/>
            <person name="Lin S.P."/>
            <person name="Qian Y."/>
            <person name="Jia H.G."/>
            <person name="Najar F.Z."/>
            <person name="Ren Q."/>
            <person name="Zhu H."/>
            <person name="Song L."/>
            <person name="White J."/>
            <person name="Yuan X."/>
            <person name="Clifton S.W."/>
            <person name="Roe B.A."/>
            <person name="McLaughlin R.E."/>
        </authorList>
    </citation>
    <scope>NUCLEOTIDE SEQUENCE [LARGE SCALE GENOMIC DNA]</scope>
    <source>
        <strain>ATCC 700294 / SF370 / Serotype M1</strain>
    </source>
</reference>
<reference key="2">
    <citation type="journal article" date="2005" name="J. Infect. Dis.">
        <title>Evolutionary origin and emergence of a highly successful clone of serotype M1 group A Streptococcus involved multiple horizontal gene transfer events.</title>
        <authorList>
            <person name="Sumby P."/>
            <person name="Porcella S.F."/>
            <person name="Madrigal A.G."/>
            <person name="Barbian K.D."/>
            <person name="Virtaneva K."/>
            <person name="Ricklefs S.M."/>
            <person name="Sturdevant D.E."/>
            <person name="Graham M.R."/>
            <person name="Vuopio-Varkila J."/>
            <person name="Hoe N.P."/>
            <person name="Musser J.M."/>
        </authorList>
    </citation>
    <scope>NUCLEOTIDE SEQUENCE [LARGE SCALE GENOMIC DNA]</scope>
    <source>
        <strain>ATCC BAA-947 / MGAS5005 / Serotype M1</strain>
    </source>
</reference>